<comment type="function">
    <text evidence="1">One of the primary rRNA binding proteins, it binds specifically to the 5'-end of 16S ribosomal RNA.</text>
</comment>
<comment type="subunit">
    <text evidence="1">Part of the 30S ribosomal subunit.</text>
</comment>
<comment type="similarity">
    <text evidence="1">Belongs to the universal ribosomal protein uS17 family.</text>
</comment>
<name>RS17_GLAP5</name>
<organism>
    <name type="scientific">Glaesserella parasuis serovar 5 (strain SH0165)</name>
    <name type="common">Haemophilus parasuis</name>
    <dbReference type="NCBI Taxonomy" id="557723"/>
    <lineage>
        <taxon>Bacteria</taxon>
        <taxon>Pseudomonadati</taxon>
        <taxon>Pseudomonadota</taxon>
        <taxon>Gammaproteobacteria</taxon>
        <taxon>Pasteurellales</taxon>
        <taxon>Pasteurellaceae</taxon>
        <taxon>Glaesserella</taxon>
    </lineage>
</organism>
<evidence type="ECO:0000255" key="1">
    <source>
        <dbReference type="HAMAP-Rule" id="MF_01345"/>
    </source>
</evidence>
<evidence type="ECO:0000305" key="2"/>
<dbReference type="EMBL" id="CP001321">
    <property type="protein sequence ID" value="ACL33166.1"/>
    <property type="molecule type" value="Genomic_DNA"/>
</dbReference>
<dbReference type="RefSeq" id="WP_005711180.1">
    <property type="nucleotide sequence ID" value="NC_011852.1"/>
</dbReference>
<dbReference type="SMR" id="B8F764"/>
<dbReference type="STRING" id="557723.HAPS_1615"/>
<dbReference type="GeneID" id="66619878"/>
<dbReference type="KEGG" id="hap:HAPS_1615"/>
<dbReference type="HOGENOM" id="CLU_073626_1_1_6"/>
<dbReference type="Proteomes" id="UP000006743">
    <property type="component" value="Chromosome"/>
</dbReference>
<dbReference type="GO" id="GO:0022627">
    <property type="term" value="C:cytosolic small ribosomal subunit"/>
    <property type="evidence" value="ECO:0007669"/>
    <property type="project" value="TreeGrafter"/>
</dbReference>
<dbReference type="GO" id="GO:0019843">
    <property type="term" value="F:rRNA binding"/>
    <property type="evidence" value="ECO:0007669"/>
    <property type="project" value="UniProtKB-UniRule"/>
</dbReference>
<dbReference type="GO" id="GO:0003735">
    <property type="term" value="F:structural constituent of ribosome"/>
    <property type="evidence" value="ECO:0007669"/>
    <property type="project" value="InterPro"/>
</dbReference>
<dbReference type="GO" id="GO:0006412">
    <property type="term" value="P:translation"/>
    <property type="evidence" value="ECO:0007669"/>
    <property type="project" value="UniProtKB-UniRule"/>
</dbReference>
<dbReference type="CDD" id="cd00364">
    <property type="entry name" value="Ribosomal_uS17"/>
    <property type="match status" value="1"/>
</dbReference>
<dbReference type="FunFam" id="2.40.50.140:FF:000014">
    <property type="entry name" value="30S ribosomal protein S17"/>
    <property type="match status" value="1"/>
</dbReference>
<dbReference type="Gene3D" id="2.40.50.140">
    <property type="entry name" value="Nucleic acid-binding proteins"/>
    <property type="match status" value="1"/>
</dbReference>
<dbReference type="HAMAP" id="MF_01345_B">
    <property type="entry name" value="Ribosomal_uS17_B"/>
    <property type="match status" value="1"/>
</dbReference>
<dbReference type="InterPro" id="IPR012340">
    <property type="entry name" value="NA-bd_OB-fold"/>
</dbReference>
<dbReference type="InterPro" id="IPR000266">
    <property type="entry name" value="Ribosomal_uS17"/>
</dbReference>
<dbReference type="InterPro" id="IPR019984">
    <property type="entry name" value="Ribosomal_uS17_bact/chlr"/>
</dbReference>
<dbReference type="InterPro" id="IPR019979">
    <property type="entry name" value="Ribosomal_uS17_CS"/>
</dbReference>
<dbReference type="NCBIfam" id="NF004123">
    <property type="entry name" value="PRK05610.1"/>
    <property type="match status" value="1"/>
</dbReference>
<dbReference type="NCBIfam" id="TIGR03635">
    <property type="entry name" value="uS17_bact"/>
    <property type="match status" value="1"/>
</dbReference>
<dbReference type="PANTHER" id="PTHR10744">
    <property type="entry name" value="40S RIBOSOMAL PROTEIN S11 FAMILY MEMBER"/>
    <property type="match status" value="1"/>
</dbReference>
<dbReference type="PANTHER" id="PTHR10744:SF1">
    <property type="entry name" value="SMALL RIBOSOMAL SUBUNIT PROTEIN US17M"/>
    <property type="match status" value="1"/>
</dbReference>
<dbReference type="Pfam" id="PF00366">
    <property type="entry name" value="Ribosomal_S17"/>
    <property type="match status" value="1"/>
</dbReference>
<dbReference type="PRINTS" id="PR00973">
    <property type="entry name" value="RIBOSOMALS17"/>
</dbReference>
<dbReference type="SUPFAM" id="SSF50249">
    <property type="entry name" value="Nucleic acid-binding proteins"/>
    <property type="match status" value="1"/>
</dbReference>
<dbReference type="PROSITE" id="PS00056">
    <property type="entry name" value="RIBOSOMAL_S17"/>
    <property type="match status" value="1"/>
</dbReference>
<accession>B8F764</accession>
<keyword id="KW-1185">Reference proteome</keyword>
<keyword id="KW-0687">Ribonucleoprotein</keyword>
<keyword id="KW-0689">Ribosomal protein</keyword>
<keyword id="KW-0694">RNA-binding</keyword>
<keyword id="KW-0699">rRNA-binding</keyword>
<gene>
    <name evidence="1" type="primary">rpsQ</name>
    <name type="ordered locus">HAPS_1615</name>
</gene>
<feature type="chain" id="PRO_1000166482" description="Small ribosomal subunit protein uS17">
    <location>
        <begin position="1"/>
        <end position="84"/>
    </location>
</feature>
<proteinExistence type="inferred from homology"/>
<reference key="1">
    <citation type="journal article" date="2009" name="J. Bacteriol.">
        <title>Complete genome sequence of Haemophilus parasuis SH0165.</title>
        <authorList>
            <person name="Yue M."/>
            <person name="Yang F."/>
            <person name="Yang J."/>
            <person name="Bei W."/>
            <person name="Cai X."/>
            <person name="Chen L."/>
            <person name="Dong J."/>
            <person name="Zhou R."/>
            <person name="Jin M."/>
            <person name="Jin Q."/>
            <person name="Chen H."/>
        </authorList>
    </citation>
    <scope>NUCLEOTIDE SEQUENCE [LARGE SCALE GENOMIC DNA]</scope>
    <source>
        <strain>SH0165</strain>
    </source>
</reference>
<protein>
    <recommendedName>
        <fullName evidence="1">Small ribosomal subunit protein uS17</fullName>
    </recommendedName>
    <alternativeName>
        <fullName evidence="2">30S ribosomal protein S17</fullName>
    </alternativeName>
</protein>
<sequence>MTDKIRTVQGKVVSDKMDKSFVVAIERTVKHPIYGKFIRRTTKLHVHDENNEAKLGDVVEVKECRPLSKTKSHTLVRVVEKAVA</sequence>